<dbReference type="EMBL" id="AB100500">
    <property type="protein sequence ID" value="BAC57016.1"/>
    <property type="molecule type" value="Genomic_DNA"/>
</dbReference>
<dbReference type="RefSeq" id="WP_014423821.1">
    <property type="nucleotide sequence ID" value="NZ_SVCA01000002.1"/>
</dbReference>
<dbReference type="SMR" id="Q84IF4"/>
<dbReference type="STRING" id="971.SAMN02910356_02571"/>
<dbReference type="GeneID" id="61461420"/>
<dbReference type="eggNOG" id="COG0081">
    <property type="taxonomic scope" value="Bacteria"/>
</dbReference>
<dbReference type="OMA" id="EFRVDKH"/>
<dbReference type="OrthoDB" id="9803740at2"/>
<dbReference type="GO" id="GO:0015934">
    <property type="term" value="C:large ribosomal subunit"/>
    <property type="evidence" value="ECO:0007669"/>
    <property type="project" value="InterPro"/>
</dbReference>
<dbReference type="GO" id="GO:0019843">
    <property type="term" value="F:rRNA binding"/>
    <property type="evidence" value="ECO:0007669"/>
    <property type="project" value="UniProtKB-UniRule"/>
</dbReference>
<dbReference type="GO" id="GO:0003735">
    <property type="term" value="F:structural constituent of ribosome"/>
    <property type="evidence" value="ECO:0007669"/>
    <property type="project" value="InterPro"/>
</dbReference>
<dbReference type="GO" id="GO:0000049">
    <property type="term" value="F:tRNA binding"/>
    <property type="evidence" value="ECO:0007669"/>
    <property type="project" value="UniProtKB-KW"/>
</dbReference>
<dbReference type="GO" id="GO:0006417">
    <property type="term" value="P:regulation of translation"/>
    <property type="evidence" value="ECO:0007669"/>
    <property type="project" value="UniProtKB-KW"/>
</dbReference>
<dbReference type="GO" id="GO:0006412">
    <property type="term" value="P:translation"/>
    <property type="evidence" value="ECO:0007669"/>
    <property type="project" value="UniProtKB-UniRule"/>
</dbReference>
<dbReference type="CDD" id="cd00403">
    <property type="entry name" value="Ribosomal_L1"/>
    <property type="match status" value="1"/>
</dbReference>
<dbReference type="FunFam" id="3.40.50.790:FF:000001">
    <property type="entry name" value="50S ribosomal protein L1"/>
    <property type="match status" value="1"/>
</dbReference>
<dbReference type="Gene3D" id="3.30.190.20">
    <property type="match status" value="1"/>
</dbReference>
<dbReference type="Gene3D" id="3.40.50.790">
    <property type="match status" value="1"/>
</dbReference>
<dbReference type="HAMAP" id="MF_01318_B">
    <property type="entry name" value="Ribosomal_uL1_B"/>
    <property type="match status" value="1"/>
</dbReference>
<dbReference type="InterPro" id="IPR005878">
    <property type="entry name" value="Ribosom_uL1_bac-type"/>
</dbReference>
<dbReference type="InterPro" id="IPR002143">
    <property type="entry name" value="Ribosomal_uL1"/>
</dbReference>
<dbReference type="InterPro" id="IPR023674">
    <property type="entry name" value="Ribosomal_uL1-like"/>
</dbReference>
<dbReference type="InterPro" id="IPR028364">
    <property type="entry name" value="Ribosomal_uL1/biogenesis"/>
</dbReference>
<dbReference type="InterPro" id="IPR016095">
    <property type="entry name" value="Ribosomal_uL1_3-a/b-sand"/>
</dbReference>
<dbReference type="InterPro" id="IPR023673">
    <property type="entry name" value="Ribosomal_uL1_CS"/>
</dbReference>
<dbReference type="NCBIfam" id="TIGR01169">
    <property type="entry name" value="rplA_bact"/>
    <property type="match status" value="1"/>
</dbReference>
<dbReference type="PANTHER" id="PTHR36427">
    <property type="entry name" value="54S RIBOSOMAL PROTEIN L1, MITOCHONDRIAL"/>
    <property type="match status" value="1"/>
</dbReference>
<dbReference type="PANTHER" id="PTHR36427:SF3">
    <property type="entry name" value="LARGE RIBOSOMAL SUBUNIT PROTEIN UL1M"/>
    <property type="match status" value="1"/>
</dbReference>
<dbReference type="Pfam" id="PF00687">
    <property type="entry name" value="Ribosomal_L1"/>
    <property type="match status" value="1"/>
</dbReference>
<dbReference type="PIRSF" id="PIRSF002155">
    <property type="entry name" value="Ribosomal_L1"/>
    <property type="match status" value="1"/>
</dbReference>
<dbReference type="SUPFAM" id="SSF56808">
    <property type="entry name" value="Ribosomal protein L1"/>
    <property type="match status" value="1"/>
</dbReference>
<dbReference type="PROSITE" id="PS01199">
    <property type="entry name" value="RIBOSOMAL_L1"/>
    <property type="match status" value="1"/>
</dbReference>
<accession>Q84IF4</accession>
<organism>
    <name type="scientific">Selenomonas ruminantium</name>
    <dbReference type="NCBI Taxonomy" id="971"/>
    <lineage>
        <taxon>Bacteria</taxon>
        <taxon>Bacillati</taxon>
        <taxon>Bacillota</taxon>
        <taxon>Negativicutes</taxon>
        <taxon>Selenomonadales</taxon>
        <taxon>Selenomonadaceae</taxon>
        <taxon>Selenomonas</taxon>
    </lineage>
</organism>
<sequence length="226" mass="24251">MAKAGKKYQDACKLVEAGKFYTAAEAMELVKKTATKKFDETIELHVRLGVDPKYADQQVRGAMVLPHGTGKSKRVLVFAKGEKVKEAEAAGADFVGSDEIVQKIQGGWLDFDVAVATPDMMGTVGRLGKVLGPRGLMPNPKLGTVTMDLTKAVSEIKAGKVEYRTDKAGNVHCPIGKASFDAEKLQQNFQALIDTLNRVKPAAAKGQYMRSITVSATMGPGIPVQL</sequence>
<protein>
    <recommendedName>
        <fullName evidence="1">Large ribosomal subunit protein uL1</fullName>
    </recommendedName>
    <alternativeName>
        <fullName evidence="2">50S ribosomal protein L1</fullName>
    </alternativeName>
</protein>
<evidence type="ECO:0000255" key="1">
    <source>
        <dbReference type="HAMAP-Rule" id="MF_01318"/>
    </source>
</evidence>
<evidence type="ECO:0000305" key="2"/>
<gene>
    <name evidence="1" type="primary">rplA</name>
</gene>
<proteinExistence type="inferred from homology"/>
<keyword id="KW-0678">Repressor</keyword>
<keyword id="KW-0687">Ribonucleoprotein</keyword>
<keyword id="KW-0689">Ribosomal protein</keyword>
<keyword id="KW-0694">RNA-binding</keyword>
<keyword id="KW-0699">rRNA-binding</keyword>
<keyword id="KW-0810">Translation regulation</keyword>
<keyword id="KW-0820">tRNA-binding</keyword>
<name>RL1_SELRU</name>
<comment type="function">
    <text evidence="1">Binds directly to 23S rRNA. The L1 stalk is quite mobile in the ribosome, and is involved in E site tRNA release.</text>
</comment>
<comment type="function">
    <text evidence="1">Protein L1 is also a translational repressor protein, it controls the translation of the L11 operon by binding to its mRNA.</text>
</comment>
<comment type="subunit">
    <text evidence="1">Part of the 50S ribosomal subunit.</text>
</comment>
<comment type="similarity">
    <text evidence="1">Belongs to the universal ribosomal protein uL1 family.</text>
</comment>
<reference key="1">
    <citation type="submission" date="2003-01" db="EMBL/GenBank/DDBJ databases">
        <title>Characterization of a 22-kDa protein required for the degradation of Selenomonas ruminantium lysine decarboxylase.</title>
        <authorList>
            <person name="Yamaguchi Y."/>
            <person name="Takatsuka Y."/>
            <person name="Kamio Y."/>
        </authorList>
    </citation>
    <scope>NUCLEOTIDE SEQUENCE [GENOMIC DNA]</scope>
</reference>
<feature type="chain" id="PRO_0000125727" description="Large ribosomal subunit protein uL1">
    <location>
        <begin position="1"/>
        <end position="226"/>
    </location>
</feature>